<sequence>MTADSALYIPPYKADDQDIVVELNSRFGAETFTVQPTRTGMPVLWVPRERLIEVLTFLRQVPKPYVMLYDLHGVDERLRTHRRGLPSADFSVFYHLMSLERNSDVMIKVALSERDLNLPTATRIWPNANWYEREVWDMYGITFTGHPHLTRMLMPPTWQGHPLRKDYPARATEFDPYSLSAAKQDLEQEALRFKPEDWGMKRHGENEDYMFLNLGPNHPSAHGAFRIILQLDGEEIIDCVPEIGYHHRGAEKMAERQSWHSFIPYTDRIDYLGGVMNNLPYVLSVEKLAGIKVPQRVDVIRIMMAEFFRILNHLLYLGTYIQDVGAMTPVFFTFTDRQRAYKVVEAITGFRLHPAWYRIGGVAHDLPRGWDKLVREFLDWMPKRLDEYETAALKNSILRGRTIGVAQYNTKEALEWGTTGAGLRATGCDFDLRKARPYSGYENFEFEVPLAHNGDAYDRCMVKMGEMRQSLRIIEQCLKNMPEGPYKADHPLTTPPPKERTLQHIETLITHFLQVSWGPVMPANEAFQMIEATKGINSYYLTSDGSTMSYRTRIRTPSFAHLQQIPSVINGSMIADLIAYLGSIDFVMADVDR</sequence>
<organism>
    <name type="scientific">Pseudomonas aeruginosa (strain UCBPP-PA14)</name>
    <dbReference type="NCBI Taxonomy" id="208963"/>
    <lineage>
        <taxon>Bacteria</taxon>
        <taxon>Pseudomonadati</taxon>
        <taxon>Pseudomonadota</taxon>
        <taxon>Gammaproteobacteria</taxon>
        <taxon>Pseudomonadales</taxon>
        <taxon>Pseudomonadaceae</taxon>
        <taxon>Pseudomonas</taxon>
    </lineage>
</organism>
<reference key="1">
    <citation type="journal article" date="2006" name="Genome Biol.">
        <title>Genomic analysis reveals that Pseudomonas aeruginosa virulence is combinatorial.</title>
        <authorList>
            <person name="Lee D.G."/>
            <person name="Urbach J.M."/>
            <person name="Wu G."/>
            <person name="Liberati N.T."/>
            <person name="Feinbaum R.L."/>
            <person name="Miyata S."/>
            <person name="Diggins L.T."/>
            <person name="He J."/>
            <person name="Saucier M."/>
            <person name="Deziel E."/>
            <person name="Friedman L."/>
            <person name="Li L."/>
            <person name="Grills G."/>
            <person name="Montgomery K."/>
            <person name="Kucherlapati R."/>
            <person name="Rahme L.G."/>
            <person name="Ausubel F.M."/>
        </authorList>
    </citation>
    <scope>NUCLEOTIDE SEQUENCE [LARGE SCALE GENOMIC DNA]</scope>
    <source>
        <strain>UCBPP-PA14</strain>
    </source>
</reference>
<keyword id="KW-0997">Cell inner membrane</keyword>
<keyword id="KW-1003">Cell membrane</keyword>
<keyword id="KW-0472">Membrane</keyword>
<keyword id="KW-0511">Multifunctional enzyme</keyword>
<keyword id="KW-0520">NAD</keyword>
<keyword id="KW-0874">Quinone</keyword>
<keyword id="KW-1278">Translocase</keyword>
<keyword id="KW-0813">Transport</keyword>
<keyword id="KW-0830">Ubiquinone</keyword>
<name>NUOCD_PSEAB</name>
<comment type="function">
    <text evidence="1">NDH-1 shuttles electrons from NADH, via FMN and iron-sulfur (Fe-S) centers, to quinones in the respiratory chain. The immediate electron acceptor for the enzyme in this species is believed to be ubiquinone. Couples the redox reaction to proton translocation (for every two electrons transferred, four hydrogen ions are translocated across the cytoplasmic membrane), and thus conserves the redox energy in a proton gradient.</text>
</comment>
<comment type="catalytic activity">
    <reaction evidence="1">
        <text>a quinone + NADH + 5 H(+)(in) = a quinol + NAD(+) + 4 H(+)(out)</text>
        <dbReference type="Rhea" id="RHEA:57888"/>
        <dbReference type="ChEBI" id="CHEBI:15378"/>
        <dbReference type="ChEBI" id="CHEBI:24646"/>
        <dbReference type="ChEBI" id="CHEBI:57540"/>
        <dbReference type="ChEBI" id="CHEBI:57945"/>
        <dbReference type="ChEBI" id="CHEBI:132124"/>
    </reaction>
</comment>
<comment type="subunit">
    <text evidence="1">NDH-1 is composed of 13 different subunits. Subunits NuoB, CD, E, F, and G constitute the peripheral sector of the complex.</text>
</comment>
<comment type="subcellular location">
    <subcellularLocation>
        <location evidence="1">Cell inner membrane</location>
        <topology evidence="1">Peripheral membrane protein</topology>
        <orientation evidence="1">Cytoplasmic side</orientation>
    </subcellularLocation>
</comment>
<comment type="similarity">
    <text evidence="1">In the N-terminal section; belongs to the complex I 30 kDa subunit family.</text>
</comment>
<comment type="similarity">
    <text evidence="1">In the C-terminal section; belongs to the complex I 49 kDa subunit family.</text>
</comment>
<dbReference type="EC" id="7.1.1.-" evidence="1"/>
<dbReference type="EMBL" id="CP000438">
    <property type="protein sequence ID" value="ABJ11862.1"/>
    <property type="molecule type" value="Genomic_DNA"/>
</dbReference>
<dbReference type="RefSeq" id="WP_003090458.1">
    <property type="nucleotide sequence ID" value="NZ_CP034244.1"/>
</dbReference>
<dbReference type="SMR" id="Q02ND1"/>
<dbReference type="KEGG" id="pau:PA14_29990"/>
<dbReference type="PseudoCAP" id="PA14_29990"/>
<dbReference type="HOGENOM" id="CLU_015134_3_2_6"/>
<dbReference type="BioCyc" id="PAER208963:G1G74-2511-MONOMER"/>
<dbReference type="Proteomes" id="UP000000653">
    <property type="component" value="Chromosome"/>
</dbReference>
<dbReference type="GO" id="GO:0030964">
    <property type="term" value="C:NADH dehydrogenase complex"/>
    <property type="evidence" value="ECO:0007669"/>
    <property type="project" value="InterPro"/>
</dbReference>
<dbReference type="GO" id="GO:0005886">
    <property type="term" value="C:plasma membrane"/>
    <property type="evidence" value="ECO:0007669"/>
    <property type="project" value="UniProtKB-SubCell"/>
</dbReference>
<dbReference type="GO" id="GO:0051287">
    <property type="term" value="F:NAD binding"/>
    <property type="evidence" value="ECO:0007669"/>
    <property type="project" value="InterPro"/>
</dbReference>
<dbReference type="GO" id="GO:0008137">
    <property type="term" value="F:NADH dehydrogenase (ubiquinone) activity"/>
    <property type="evidence" value="ECO:0007669"/>
    <property type="project" value="InterPro"/>
</dbReference>
<dbReference type="GO" id="GO:0050136">
    <property type="term" value="F:NADH:ubiquinone reductase (non-electrogenic) activity"/>
    <property type="evidence" value="ECO:0007669"/>
    <property type="project" value="UniProtKB-UniRule"/>
</dbReference>
<dbReference type="GO" id="GO:0048038">
    <property type="term" value="F:quinone binding"/>
    <property type="evidence" value="ECO:0007669"/>
    <property type="project" value="UniProtKB-KW"/>
</dbReference>
<dbReference type="FunFam" id="1.10.645.10:FF:000001">
    <property type="entry name" value="NADH-quinone oxidoreductase subunit C/D"/>
    <property type="match status" value="1"/>
</dbReference>
<dbReference type="FunFam" id="3.30.460.80:FF:000001">
    <property type="entry name" value="NADH-quinone oxidoreductase subunit C/D"/>
    <property type="match status" value="1"/>
</dbReference>
<dbReference type="Gene3D" id="1.10.645.10">
    <property type="entry name" value="Cytochrome-c3 Hydrogenase, chain B"/>
    <property type="match status" value="1"/>
</dbReference>
<dbReference type="Gene3D" id="3.30.460.80">
    <property type="entry name" value="NADH:ubiquinone oxidoreductase, 30kDa subunit"/>
    <property type="match status" value="1"/>
</dbReference>
<dbReference type="HAMAP" id="MF_01357">
    <property type="entry name" value="NDH1_NuoC"/>
    <property type="match status" value="1"/>
</dbReference>
<dbReference type="HAMAP" id="MF_01359">
    <property type="entry name" value="NDH1_NuoCD_1"/>
    <property type="match status" value="1"/>
</dbReference>
<dbReference type="HAMAP" id="MF_01358">
    <property type="entry name" value="NDH1_NuoD"/>
    <property type="match status" value="1"/>
</dbReference>
<dbReference type="InterPro" id="IPR010218">
    <property type="entry name" value="NADH_DH_suC"/>
</dbReference>
<dbReference type="InterPro" id="IPR023062">
    <property type="entry name" value="NADH_DH_suCD"/>
</dbReference>
<dbReference type="InterPro" id="IPR001135">
    <property type="entry name" value="NADH_Q_OxRdtase_suD"/>
</dbReference>
<dbReference type="InterPro" id="IPR037232">
    <property type="entry name" value="NADH_quin_OxRdtase_su_C/D-like"/>
</dbReference>
<dbReference type="InterPro" id="IPR001268">
    <property type="entry name" value="NADH_UbQ_OxRdtase_30kDa_su"/>
</dbReference>
<dbReference type="InterPro" id="IPR014029">
    <property type="entry name" value="NADH_UbQ_OxRdtase_49kDa_CS"/>
</dbReference>
<dbReference type="InterPro" id="IPR022885">
    <property type="entry name" value="NDH1_su_D/H"/>
</dbReference>
<dbReference type="InterPro" id="IPR029014">
    <property type="entry name" value="NiFe-Hase_large"/>
</dbReference>
<dbReference type="NCBIfam" id="TIGR01961">
    <property type="entry name" value="NuoC_fam"/>
    <property type="match status" value="1"/>
</dbReference>
<dbReference type="NCBIfam" id="TIGR01962">
    <property type="entry name" value="NuoD"/>
    <property type="match status" value="1"/>
</dbReference>
<dbReference type="NCBIfam" id="NF004739">
    <property type="entry name" value="PRK06075.1"/>
    <property type="match status" value="1"/>
</dbReference>
<dbReference type="NCBIfam" id="NF008728">
    <property type="entry name" value="PRK11742.1"/>
    <property type="match status" value="1"/>
</dbReference>
<dbReference type="PANTHER" id="PTHR11993:SF45">
    <property type="entry name" value="NADH-QUINONE OXIDOREDUCTASE SUBUNIT C_D"/>
    <property type="match status" value="1"/>
</dbReference>
<dbReference type="PANTHER" id="PTHR11993">
    <property type="entry name" value="NADH-UBIQUINONE OXIDOREDUCTASE 49 KDA SUBUNIT"/>
    <property type="match status" value="1"/>
</dbReference>
<dbReference type="Pfam" id="PF00329">
    <property type="entry name" value="Complex1_30kDa"/>
    <property type="match status" value="1"/>
</dbReference>
<dbReference type="Pfam" id="PF00346">
    <property type="entry name" value="Complex1_49kDa"/>
    <property type="match status" value="1"/>
</dbReference>
<dbReference type="SUPFAM" id="SSF56762">
    <property type="entry name" value="HydB/Nqo4-like"/>
    <property type="match status" value="1"/>
</dbReference>
<dbReference type="SUPFAM" id="SSF143243">
    <property type="entry name" value="Nqo5-like"/>
    <property type="match status" value="1"/>
</dbReference>
<dbReference type="PROSITE" id="PS00535">
    <property type="entry name" value="COMPLEX1_49K"/>
    <property type="match status" value="1"/>
</dbReference>
<protein>
    <recommendedName>
        <fullName evidence="1">NADH-quinone oxidoreductase subunit C/D</fullName>
        <ecNumber evidence="1">7.1.1.-</ecNumber>
    </recommendedName>
    <alternativeName>
        <fullName evidence="1">NADH dehydrogenase I subunit C/D</fullName>
    </alternativeName>
    <alternativeName>
        <fullName evidence="1">NDH-1 subunit C/D</fullName>
    </alternativeName>
</protein>
<feature type="chain" id="PRO_0000358656" description="NADH-quinone oxidoreductase subunit C/D">
    <location>
        <begin position="1"/>
        <end position="593"/>
    </location>
</feature>
<feature type="region of interest" description="NADH dehydrogenase I subunit C" evidence="1">
    <location>
        <begin position="1"/>
        <end position="184"/>
    </location>
</feature>
<feature type="region of interest" description="NADH dehydrogenase I subunit D" evidence="1">
    <location>
        <begin position="208"/>
        <end position="593"/>
    </location>
</feature>
<gene>
    <name evidence="1" type="primary">nuoC</name>
    <name evidence="1" type="synonym">nuoCD</name>
    <name evidence="1" type="synonym">nuoD</name>
    <name type="ordered locus">PA14_29990</name>
</gene>
<evidence type="ECO:0000255" key="1">
    <source>
        <dbReference type="HAMAP-Rule" id="MF_01359"/>
    </source>
</evidence>
<proteinExistence type="inferred from homology"/>
<accession>Q02ND1</accession>